<comment type="function">
    <text evidence="1 10 12">Possesses phosphatidylinositol 4,5-bisphosphate-dependent GTPase-activating protein activity for ARF1 (ADP ribosylation factor 1) and ARF5 and a lesser activity towards ARF6. May coordinate membrane trafficking with cell growth or actin cytoskeleton remodeling by binding to both SRC and PIP2. May function as a signal transduction protein involved in the differentiation of fibroblasts into adipocytes and possibly other cell types. Part of the ciliary targeting complex containing Rab11, ASAP1, Rabin8/RAB3IP, RAB11FIP3 and ARF4, which direct preciliary vesicle trafficking to mother centriole and ciliogenesis initiation (PubMed:25673879).</text>
</comment>
<comment type="activity regulation">
    <text evidence="1">Activity stimulated by phosphatidylinositol 4,5-bisphosphate (PIP2).</text>
</comment>
<comment type="subunit">
    <text evidence="1 8 9 11 12">Homodimer. Interacts with SRC and CRK. Interacts with RAB11FIP3. Interacts with PTK2B/PYK2 (By similarity). Interacts with CTTN. Interacts (via SH3 domain) with APC. Interacts with REPS2; the interaction is direct (PubMed:12149250). Forms a complex containing RAB11A, ASAP1, RAB3IP, RAP11FIP3 and ARF4; the complex promotes preciliary trafficking; the complex binds to RHO in photoreceptor cells and promotes RHO ciliary transport (PubMed:25673879).</text>
</comment>
<comment type="interaction">
    <interactant intactId="EBI-346622">
        <id>Q9ULH1</id>
    </interactant>
    <interactant intactId="EBI-744027">
        <id>Q13191</id>
        <label>CBLB</label>
    </interactant>
    <organismsDiffer>false</organismsDiffer>
    <experiments>2</experiments>
</comment>
<comment type="interaction">
    <interactant intactId="EBI-346622">
        <id>Q9ULH1</id>
    </interactant>
    <interactant intactId="EBI-886">
        <id>P46108</id>
        <label>CRK</label>
    </interactant>
    <organismsDiffer>false</organismsDiffer>
    <experiments>5</experiments>
</comment>
<comment type="interaction">
    <interactant intactId="EBI-346622">
        <id>Q9ULH1</id>
    </interactant>
    <interactant intactId="EBI-351886">
        <id>Q14247</id>
        <label>CTTN</label>
    </interactant>
    <organismsDiffer>false</organismsDiffer>
    <experiments>7</experiments>
</comment>
<comment type="interaction">
    <interactant intactId="EBI-346622">
        <id>Q9ULH1</id>
    </interactant>
    <interactant intactId="EBI-515315">
        <id>P06241</id>
        <label>FYN</label>
    </interactant>
    <organismsDiffer>false</organismsDiffer>
    <experiments>3</experiments>
</comment>
<comment type="interaction">
    <interactant intactId="EBI-346622">
        <id>Q9ULH1</id>
    </interactant>
    <interactant intactId="EBI-401755">
        <id>P62993</id>
        <label>GRB2</label>
    </interactant>
    <organismsDiffer>false</organismsDiffer>
    <experiments>12</experiments>
</comment>
<comment type="interaction">
    <interactant intactId="EBI-346622">
        <id>Q9ULH1</id>
    </interactant>
    <interactant intactId="EBI-346340">
        <id>P08631</id>
        <label>HCK</label>
    </interactant>
    <organismsDiffer>false</organismsDiffer>
    <experiments>2</experiments>
</comment>
<comment type="interaction">
    <interactant intactId="EBI-346622">
        <id>Q9ULH1</id>
    </interactant>
    <interactant intactId="EBI-389883">
        <id>P16333</id>
        <label>NCK1</label>
    </interactant>
    <organismsDiffer>false</organismsDiffer>
    <experiments>6</experiments>
</comment>
<comment type="interaction">
    <interactant intactId="EBI-346622">
        <id>Q9ULH1</id>
    </interactant>
    <interactant intactId="EBI-79387">
        <id>P19174</id>
        <label>PLCG1</label>
    </interactant>
    <organismsDiffer>false</organismsDiffer>
    <experiments>3</experiments>
</comment>
<comment type="interaction">
    <interactant intactId="EBI-346622">
        <id>Q9ULH1</id>
    </interactant>
    <interactant intactId="EBI-346595">
        <id>Q96B97</id>
        <label>SH3KBP1</label>
    </interactant>
    <organismsDiffer>false</organismsDiffer>
    <experiments>13</experiments>
</comment>
<comment type="interaction">
    <interactant intactId="EBI-346622">
        <id>Q9ULH1</id>
    </interactant>
    <interactant intactId="EBI-621482">
        <id>P12931</id>
        <label>SRC</label>
    </interactant>
    <organismsDiffer>false</organismsDiffer>
    <experiments>3</experiments>
</comment>
<comment type="interaction">
    <interactant intactId="EBI-346622">
        <id>Q9ULH1</id>
    </interactant>
    <interactant intactId="EBI-3390054">
        <id>P0CG48</id>
        <label>UBC</label>
    </interactant>
    <organismsDiffer>false</organismsDiffer>
    <experiments>2</experiments>
</comment>
<comment type="interaction">
    <interactant intactId="EBI-346622">
        <id>Q9ULH1</id>
    </interactant>
    <interactant intactId="EBI-8069633">
        <id>P70039</id>
        <label>apc</label>
    </interactant>
    <organismsDiffer>true</organismsDiffer>
    <experiments>5</experiments>
</comment>
<comment type="subcellular location">
    <subcellularLocation>
        <location evidence="1">Cytoplasm</location>
    </subcellularLocation>
    <subcellularLocation>
        <location evidence="1">Membrane</location>
    </subcellularLocation>
    <subcellularLocation>
        <location evidence="12">Golgi apparatus</location>
    </subcellularLocation>
    <subcellularLocation>
        <location evidence="12">Golgi apparatus</location>
        <location evidence="12">trans-Golgi network</location>
    </subcellularLocation>
    <text evidence="1 12">Predominantly cytoplasmic. Partially membrane-associated. Localized to the Golgi, TGN and rhodopsin transport carriers (RTC) when interacting with RHO in photoreceptors (PubMed:25673879). Localized to RTC when interacting with RAB11A and RAB11FIP3 in photoreceptors (PubMed:25673879).</text>
</comment>
<comment type="alternative products">
    <event type="alternative splicing"/>
    <isoform>
        <id>Q9ULH1-1</id>
        <name>2</name>
        <sequence type="displayed"/>
    </isoform>
    <isoform>
        <id>Q9ULH1-2</id>
        <name>1</name>
        <sequence type="described" ref="VSP_008365"/>
    </isoform>
</comment>
<comment type="domain">
    <text evidence="1">The PH domain most probably contributes to the phosphoinositide-dependent regulation of ADP ribosylation factors.</text>
</comment>
<comment type="PTM">
    <text evidence="1">Phosphorylated on tyrosine residues by SRC.</text>
</comment>
<comment type="online information" name="Atlas of Genetics and Cytogenetics in Oncology and Haematology">
    <link uri="https://atlasgeneticsoncology.org/gene/44351/ASAP1"/>
</comment>
<feature type="chain" id="PRO_0000074196" description="Arf-GAP with SH3 domain, ANK repeat and PH domain-containing protein 1">
    <location>
        <begin position="1"/>
        <end position="1129"/>
    </location>
</feature>
<feature type="domain" description="PH" evidence="4">
    <location>
        <begin position="324"/>
        <end position="416"/>
    </location>
</feature>
<feature type="domain" description="Arf-GAP" evidence="6">
    <location>
        <begin position="439"/>
        <end position="560"/>
    </location>
</feature>
<feature type="repeat" description="ANK 1">
    <location>
        <begin position="600"/>
        <end position="632"/>
    </location>
</feature>
<feature type="repeat" description="ANK 2">
    <location>
        <begin position="636"/>
        <end position="665"/>
    </location>
</feature>
<feature type="domain" description="SH3" evidence="5">
    <location>
        <begin position="1067"/>
        <end position="1129"/>
    </location>
</feature>
<feature type="zinc finger region" description="C4-type" evidence="6">
    <location>
        <begin position="454"/>
        <end position="477"/>
    </location>
</feature>
<feature type="region of interest" description="Disordered" evidence="7">
    <location>
        <begin position="713"/>
        <end position="760"/>
    </location>
</feature>
<feature type="region of interest" description="Disordered" evidence="7">
    <location>
        <begin position="776"/>
        <end position="1062"/>
    </location>
</feature>
<feature type="compositionally biased region" description="Acidic residues" evidence="7">
    <location>
        <begin position="713"/>
        <end position="722"/>
    </location>
</feature>
<feature type="compositionally biased region" description="Basic and acidic residues" evidence="7">
    <location>
        <begin position="723"/>
        <end position="734"/>
    </location>
</feature>
<feature type="compositionally biased region" description="Polar residues" evidence="7">
    <location>
        <begin position="735"/>
        <end position="747"/>
    </location>
</feature>
<feature type="compositionally biased region" description="Low complexity" evidence="7">
    <location>
        <begin position="777"/>
        <end position="788"/>
    </location>
</feature>
<feature type="compositionally biased region" description="Low complexity" evidence="7">
    <location>
        <begin position="809"/>
        <end position="822"/>
    </location>
</feature>
<feature type="compositionally biased region" description="Polar residues" evidence="7">
    <location>
        <begin position="862"/>
        <end position="872"/>
    </location>
</feature>
<feature type="compositionally biased region" description="Low complexity" evidence="7">
    <location>
        <begin position="876"/>
        <end position="889"/>
    </location>
</feature>
<feature type="compositionally biased region" description="Pro residues" evidence="7">
    <location>
        <begin position="932"/>
        <end position="943"/>
    </location>
</feature>
<feature type="compositionally biased region" description="Pro residues" evidence="7">
    <location>
        <begin position="956"/>
        <end position="966"/>
    </location>
</feature>
<feature type="compositionally biased region" description="Polar residues" evidence="7">
    <location>
        <begin position="1001"/>
        <end position="1018"/>
    </location>
</feature>
<feature type="modified residue" description="Phosphoserine" evidence="19 20">
    <location>
        <position position="717"/>
    </location>
</feature>
<feature type="modified residue" description="Phosphoserine" evidence="2">
    <location>
        <position position="726"/>
    </location>
</feature>
<feature type="modified residue" description="Phosphoserine" evidence="19 20">
    <location>
        <position position="839"/>
    </location>
</feature>
<feature type="modified residue" description="Phosphoserine" evidence="15 17 19">
    <location>
        <position position="843"/>
    </location>
</feature>
<feature type="modified residue" description="Phosphoserine" evidence="15">
    <location>
        <position position="1008"/>
    </location>
</feature>
<feature type="modified residue" description="Phosphoserine" evidence="16 17 18 19">
    <location>
        <position position="1027"/>
    </location>
</feature>
<feature type="modified residue" description="Phosphoserine" evidence="19">
    <location>
        <position position="1041"/>
    </location>
</feature>
<feature type="modified residue" description="Phosphothreonine" evidence="3">
    <location>
        <position position="1048"/>
    </location>
</feature>
<feature type="modified residue" description="Phosphoserine" evidence="3">
    <location>
        <position position="1128"/>
    </location>
</feature>
<feature type="splice variant" id="VSP_008365" description="In isoform 1." evidence="13">
    <original>E</original>
    <variation>ESRR</variation>
    <location>
        <position position="303"/>
    </location>
</feature>
<feature type="sequence variant" id="VAR_055528" description="In dbSNP:rs966185.">
    <original>I</original>
    <variation>V</variation>
    <location>
        <position position="728"/>
    </location>
</feature>
<feature type="strand" evidence="21">
    <location>
        <begin position="327"/>
        <end position="334"/>
    </location>
</feature>
<feature type="strand" evidence="21">
    <location>
        <begin position="336"/>
        <end position="338"/>
    </location>
</feature>
<feature type="strand" evidence="21">
    <location>
        <begin position="342"/>
        <end position="350"/>
    </location>
</feature>
<feature type="strand" evidence="21">
    <location>
        <begin position="353"/>
        <end position="356"/>
    </location>
</feature>
<feature type="strand" evidence="21">
    <location>
        <begin position="366"/>
        <end position="369"/>
    </location>
</feature>
<feature type="turn" evidence="21">
    <location>
        <begin position="370"/>
        <end position="372"/>
    </location>
</feature>
<feature type="strand" evidence="21">
    <location>
        <begin position="373"/>
        <end position="377"/>
    </location>
</feature>
<feature type="strand" evidence="21">
    <location>
        <begin position="379"/>
        <end position="383"/>
    </location>
</feature>
<feature type="strand" evidence="21">
    <location>
        <begin position="385"/>
        <end position="389"/>
    </location>
</feature>
<feature type="strand" evidence="21">
    <location>
        <begin position="392"/>
        <end position="397"/>
    </location>
</feature>
<feature type="helix" evidence="21">
    <location>
        <begin position="401"/>
        <end position="419"/>
    </location>
</feature>
<feature type="strand" evidence="22">
    <location>
        <begin position="1070"/>
        <end position="1076"/>
    </location>
</feature>
<feature type="strand" evidence="22">
    <location>
        <begin position="1081"/>
        <end position="1085"/>
    </location>
</feature>
<feature type="strand" evidence="22">
    <location>
        <begin position="1093"/>
        <end position="1098"/>
    </location>
</feature>
<feature type="strand" evidence="22">
    <location>
        <begin position="1101"/>
        <end position="1109"/>
    </location>
</feature>
<feature type="strand" evidence="22">
    <location>
        <begin position="1116"/>
        <end position="1120"/>
    </location>
</feature>
<feature type="helix" evidence="22">
    <location>
        <begin position="1121"/>
        <end position="1123"/>
    </location>
</feature>
<feature type="strand" evidence="22">
    <location>
        <begin position="1124"/>
        <end position="1126"/>
    </location>
</feature>
<name>ASAP1_HUMAN</name>
<dbReference type="EMBL" id="AC009682">
    <property type="status" value="NOT_ANNOTATED_CDS"/>
    <property type="molecule type" value="Genomic_DNA"/>
</dbReference>
<dbReference type="EMBL" id="AC103725">
    <property type="status" value="NOT_ANNOTATED_CDS"/>
    <property type="molecule type" value="Genomic_DNA"/>
</dbReference>
<dbReference type="EMBL" id="AC131568">
    <property type="status" value="NOT_ANNOTATED_CDS"/>
    <property type="molecule type" value="Genomic_DNA"/>
</dbReference>
<dbReference type="EMBL" id="AC139019">
    <property type="status" value="NOT_ANNOTATED_CDS"/>
    <property type="molecule type" value="Genomic_DNA"/>
</dbReference>
<dbReference type="EMBL" id="CH471060">
    <property type="protein sequence ID" value="EAW92130.1"/>
    <property type="molecule type" value="Genomic_DNA"/>
</dbReference>
<dbReference type="EMBL" id="BC137135">
    <property type="protein sequence ID" value="AAI37136.1"/>
    <property type="molecule type" value="mRNA"/>
</dbReference>
<dbReference type="EMBL" id="BX537768">
    <property type="protein sequence ID" value="CAD97831.1"/>
    <property type="molecule type" value="mRNA"/>
</dbReference>
<dbReference type="EMBL" id="AB033075">
    <property type="protein sequence ID" value="BAA86563.1"/>
    <property type="molecule type" value="mRNA"/>
</dbReference>
<dbReference type="CCDS" id="CCDS6362.1">
    <molecule id="Q9ULH1-1"/>
</dbReference>
<dbReference type="RefSeq" id="NP_001234925.1">
    <property type="nucleotide sequence ID" value="NM_001247996.1"/>
</dbReference>
<dbReference type="RefSeq" id="NP_001349853.1">
    <molecule id="Q9ULH1-2"/>
    <property type="nucleotide sequence ID" value="NM_001362924.1"/>
</dbReference>
<dbReference type="RefSeq" id="NP_060952.2">
    <molecule id="Q9ULH1-1"/>
    <property type="nucleotide sequence ID" value="NM_018482.3"/>
</dbReference>
<dbReference type="RefSeq" id="XP_005250982.1">
    <property type="nucleotide sequence ID" value="XM_005250925.1"/>
</dbReference>
<dbReference type="RefSeq" id="XP_006716626.1">
    <property type="nucleotide sequence ID" value="XM_006716563.3"/>
</dbReference>
<dbReference type="RefSeq" id="XP_011515354.1">
    <molecule id="Q9ULH1-2"/>
    <property type="nucleotide sequence ID" value="XM_011517052.3"/>
</dbReference>
<dbReference type="RefSeq" id="XP_047277755.1">
    <molecule id="Q9ULH1-2"/>
    <property type="nucleotide sequence ID" value="XM_047421799.1"/>
</dbReference>
<dbReference type="RefSeq" id="XP_047277756.1">
    <molecule id="Q9ULH1-1"/>
    <property type="nucleotide sequence ID" value="XM_047421800.1"/>
</dbReference>
<dbReference type="PDB" id="2D1X">
    <property type="method" value="X-ray"/>
    <property type="resolution" value="1.90 A"/>
    <property type="chains" value="P/Q=823-837"/>
</dbReference>
<dbReference type="PDB" id="2DA0">
    <property type="method" value="NMR"/>
    <property type="chains" value="A=323-423"/>
</dbReference>
<dbReference type="PDB" id="2ED1">
    <property type="method" value="NMR"/>
    <property type="chains" value="A=1067-1129"/>
</dbReference>
<dbReference type="PDB" id="2RQT">
    <property type="method" value="NMR"/>
    <property type="chains" value="A=1069-1129"/>
</dbReference>
<dbReference type="PDB" id="2RQU">
    <property type="method" value="NMR"/>
    <property type="chains" value="A=1069-1129"/>
</dbReference>
<dbReference type="PDBsum" id="2D1X"/>
<dbReference type="PDBsum" id="2DA0"/>
<dbReference type="PDBsum" id="2ED1"/>
<dbReference type="PDBsum" id="2RQT"/>
<dbReference type="PDBsum" id="2RQU"/>
<dbReference type="BMRB" id="Q9ULH1"/>
<dbReference type="SMR" id="Q9ULH1"/>
<dbReference type="BioGRID" id="119126">
    <property type="interactions" value="68"/>
</dbReference>
<dbReference type="CORUM" id="Q9ULH1"/>
<dbReference type="FunCoup" id="Q9ULH1">
    <property type="interactions" value="1757"/>
</dbReference>
<dbReference type="IntAct" id="Q9ULH1">
    <property type="interactions" value="43"/>
</dbReference>
<dbReference type="MINT" id="Q9ULH1"/>
<dbReference type="STRING" id="9606.ENSP00000429900"/>
<dbReference type="BindingDB" id="Q9ULH1"/>
<dbReference type="ChEMBL" id="CHEMBL2146311"/>
<dbReference type="GlyGen" id="Q9ULH1">
    <property type="glycosylation" value="4 sites, 1 O-linked glycan (2 sites)"/>
</dbReference>
<dbReference type="iPTMnet" id="Q9ULH1"/>
<dbReference type="PhosphoSitePlus" id="Q9ULH1"/>
<dbReference type="BioMuta" id="ASAP1"/>
<dbReference type="DMDM" id="296439459"/>
<dbReference type="jPOST" id="Q9ULH1"/>
<dbReference type="MassIVE" id="Q9ULH1"/>
<dbReference type="PaxDb" id="9606-ENSP00000429900"/>
<dbReference type="PeptideAtlas" id="Q9ULH1"/>
<dbReference type="ProteomicsDB" id="85025">
    <molecule id="Q9ULH1-1"/>
</dbReference>
<dbReference type="ProteomicsDB" id="85026">
    <molecule id="Q9ULH1-2"/>
</dbReference>
<dbReference type="Pumba" id="Q9ULH1"/>
<dbReference type="ABCD" id="Q9ULH1">
    <property type="antibodies" value="7 sequenced antibodies"/>
</dbReference>
<dbReference type="Antibodypedia" id="27290">
    <property type="antibodies" value="232 antibodies from 29 providers"/>
</dbReference>
<dbReference type="CPTC" id="Q9ULH1">
    <property type="antibodies" value="3 antibodies"/>
</dbReference>
<dbReference type="DNASU" id="50807"/>
<dbReference type="Ensembl" id="ENST00000518721.6">
    <molecule id="Q9ULH1-1"/>
    <property type="protein sequence ID" value="ENSP00000429900.1"/>
    <property type="gene ID" value="ENSG00000153317.15"/>
</dbReference>
<dbReference type="GeneID" id="50807"/>
<dbReference type="KEGG" id="hsa:50807"/>
<dbReference type="MANE-Select" id="ENST00000518721.6">
    <property type="protein sequence ID" value="ENSP00000429900.1"/>
    <property type="RefSeq nucleotide sequence ID" value="NM_018482.4"/>
    <property type="RefSeq protein sequence ID" value="NP_060952.2"/>
</dbReference>
<dbReference type="UCSC" id="uc003yta.3">
    <molecule id="Q9ULH1-1"/>
    <property type="organism name" value="human"/>
</dbReference>
<dbReference type="AGR" id="HGNC:2720"/>
<dbReference type="CTD" id="50807"/>
<dbReference type="DisGeNET" id="50807"/>
<dbReference type="GeneCards" id="ASAP1"/>
<dbReference type="HGNC" id="HGNC:2720">
    <property type="gene designation" value="ASAP1"/>
</dbReference>
<dbReference type="HPA" id="ENSG00000153317">
    <property type="expression patterns" value="Low tissue specificity"/>
</dbReference>
<dbReference type="MIM" id="605953">
    <property type="type" value="gene"/>
</dbReference>
<dbReference type="neXtProt" id="NX_Q9ULH1"/>
<dbReference type="OpenTargets" id="ENSG00000153317"/>
<dbReference type="PharmGKB" id="PA164716055"/>
<dbReference type="VEuPathDB" id="HostDB:ENSG00000153317"/>
<dbReference type="eggNOG" id="KOG0521">
    <property type="taxonomic scope" value="Eukaryota"/>
</dbReference>
<dbReference type="GeneTree" id="ENSGT00940000158547"/>
<dbReference type="HOGENOM" id="CLU_006942_0_0_1"/>
<dbReference type="InParanoid" id="Q9ULH1"/>
<dbReference type="OMA" id="CAVKNGM"/>
<dbReference type="OrthoDB" id="435430at2759"/>
<dbReference type="PAN-GO" id="Q9ULH1">
    <property type="GO annotations" value="6 GO annotations based on evolutionary models"/>
</dbReference>
<dbReference type="PhylomeDB" id="Q9ULH1"/>
<dbReference type="TreeFam" id="TF325156"/>
<dbReference type="PathwayCommons" id="Q9ULH1"/>
<dbReference type="Reactome" id="R-HSA-5620916">
    <property type="pathway name" value="VxPx cargo-targeting to cilium"/>
</dbReference>
<dbReference type="SignaLink" id="Q9ULH1"/>
<dbReference type="SIGNOR" id="Q9ULH1"/>
<dbReference type="BioGRID-ORCS" id="50807">
    <property type="hits" value="16 hits in 1154 CRISPR screens"/>
</dbReference>
<dbReference type="ChiTaRS" id="ASAP1">
    <property type="organism name" value="human"/>
</dbReference>
<dbReference type="EvolutionaryTrace" id="Q9ULH1"/>
<dbReference type="GeneWiki" id="DDEF1"/>
<dbReference type="GenomeRNAi" id="50807"/>
<dbReference type="Pharos" id="Q9ULH1">
    <property type="development level" value="Tbio"/>
</dbReference>
<dbReference type="PRO" id="PR:Q9ULH1"/>
<dbReference type="Proteomes" id="UP000005640">
    <property type="component" value="Chromosome 8"/>
</dbReference>
<dbReference type="RNAct" id="Q9ULH1">
    <property type="molecule type" value="protein"/>
</dbReference>
<dbReference type="Bgee" id="ENSG00000153317">
    <property type="expression patterns" value="Expressed in endothelial cell and 197 other cell types or tissues"/>
</dbReference>
<dbReference type="ExpressionAtlas" id="Q9ULH1">
    <property type="expression patterns" value="baseline and differential"/>
</dbReference>
<dbReference type="GO" id="GO:0034451">
    <property type="term" value="C:centriolar satellite"/>
    <property type="evidence" value="ECO:0000314"/>
    <property type="project" value="HPA"/>
</dbReference>
<dbReference type="GO" id="GO:0005829">
    <property type="term" value="C:cytosol"/>
    <property type="evidence" value="ECO:0000304"/>
    <property type="project" value="Reactome"/>
</dbReference>
<dbReference type="GO" id="GO:0005794">
    <property type="term" value="C:Golgi apparatus"/>
    <property type="evidence" value="ECO:0000314"/>
    <property type="project" value="HPA"/>
</dbReference>
<dbReference type="GO" id="GO:0000139">
    <property type="term" value="C:Golgi membrane"/>
    <property type="evidence" value="ECO:0000314"/>
    <property type="project" value="UniProtKB"/>
</dbReference>
<dbReference type="GO" id="GO:0005886">
    <property type="term" value="C:plasma membrane"/>
    <property type="evidence" value="ECO:0000314"/>
    <property type="project" value="HPA"/>
</dbReference>
<dbReference type="GO" id="GO:0002102">
    <property type="term" value="C:podosome"/>
    <property type="evidence" value="ECO:0000318"/>
    <property type="project" value="GO_Central"/>
</dbReference>
<dbReference type="GO" id="GO:0032588">
    <property type="term" value="C:trans-Golgi network membrane"/>
    <property type="evidence" value="ECO:0000314"/>
    <property type="project" value="UniProtKB"/>
</dbReference>
<dbReference type="GO" id="GO:0045296">
    <property type="term" value="F:cadherin binding"/>
    <property type="evidence" value="ECO:0007005"/>
    <property type="project" value="BHF-UCL"/>
</dbReference>
<dbReference type="GO" id="GO:0005096">
    <property type="term" value="F:GTPase activator activity"/>
    <property type="evidence" value="ECO:0000318"/>
    <property type="project" value="GO_Central"/>
</dbReference>
<dbReference type="GO" id="GO:0008270">
    <property type="term" value="F:zinc ion binding"/>
    <property type="evidence" value="ECO:0007669"/>
    <property type="project" value="UniProtKB-KW"/>
</dbReference>
<dbReference type="GO" id="GO:0060271">
    <property type="term" value="P:cilium assembly"/>
    <property type="evidence" value="ECO:0000315"/>
    <property type="project" value="UniProtKB"/>
</dbReference>
<dbReference type="GO" id="GO:1903527">
    <property type="term" value="P:positive regulation of membrane tubulation"/>
    <property type="evidence" value="ECO:0000318"/>
    <property type="project" value="GO_Central"/>
</dbReference>
<dbReference type="GO" id="GO:0061512">
    <property type="term" value="P:protein localization to cilium"/>
    <property type="evidence" value="ECO:0000314"/>
    <property type="project" value="UniProtKB"/>
</dbReference>
<dbReference type="CDD" id="cd08848">
    <property type="entry name" value="ArfGap_ASAP1"/>
    <property type="match status" value="1"/>
</dbReference>
<dbReference type="CDD" id="cd07641">
    <property type="entry name" value="BAR_ASAP1"/>
    <property type="match status" value="1"/>
</dbReference>
<dbReference type="CDD" id="cd13251">
    <property type="entry name" value="PH_ASAP"/>
    <property type="match status" value="1"/>
</dbReference>
<dbReference type="CDD" id="cd11965">
    <property type="entry name" value="SH3_ASAP1"/>
    <property type="match status" value="1"/>
</dbReference>
<dbReference type="FunFam" id="1.20.1270.60:FF:000004">
    <property type="entry name" value="Arf-GAP with SH3 domain, ANK repeat and PH domain-containing protein 1"/>
    <property type="match status" value="1"/>
</dbReference>
<dbReference type="FunFam" id="1.25.40.950:FF:000001">
    <property type="entry name" value="Arf-GAP with SH3 domain, ANK repeat and PH domain-containing protein 1"/>
    <property type="match status" value="1"/>
</dbReference>
<dbReference type="FunFam" id="1.10.220.150:FF:000002">
    <property type="entry name" value="arf-GAP with SH3 domain, ANK repeat and PH domain-containing protein 1"/>
    <property type="match status" value="1"/>
</dbReference>
<dbReference type="FunFam" id="1.25.40.20:FF:000006">
    <property type="entry name" value="Arf-GAP with SH3 domain, ANK repeat and PH domain-containing protein 2"/>
    <property type="match status" value="1"/>
</dbReference>
<dbReference type="FunFam" id="2.30.29.30:FF:000012">
    <property type="entry name" value="Arf-GAP with SH3 domain, ANK repeat and PH domain-containing protein 2"/>
    <property type="match status" value="1"/>
</dbReference>
<dbReference type="FunFam" id="2.30.30.40:FF:000012">
    <property type="entry name" value="Arf-GAP with SH3 domain, ANK repeat and PH domain-containing protein 2"/>
    <property type="match status" value="1"/>
</dbReference>
<dbReference type="Gene3D" id="1.25.40.950">
    <property type="match status" value="1"/>
</dbReference>
<dbReference type="Gene3D" id="1.25.40.20">
    <property type="entry name" value="Ankyrin repeat-containing domain"/>
    <property type="match status" value="1"/>
</dbReference>
<dbReference type="Gene3D" id="1.10.220.150">
    <property type="entry name" value="Arf GTPase activating protein"/>
    <property type="match status" value="1"/>
</dbReference>
<dbReference type="Gene3D" id="1.20.1270.60">
    <property type="entry name" value="Arfaptin homology (AH) domain/BAR domain"/>
    <property type="match status" value="1"/>
</dbReference>
<dbReference type="Gene3D" id="2.30.29.30">
    <property type="entry name" value="Pleckstrin-homology domain (PH domain)/Phosphotyrosine-binding domain (PTB)"/>
    <property type="match status" value="1"/>
</dbReference>
<dbReference type="Gene3D" id="2.30.30.40">
    <property type="entry name" value="SH3 Domains"/>
    <property type="match status" value="1"/>
</dbReference>
<dbReference type="IDEAL" id="IID00333"/>
<dbReference type="InterPro" id="IPR027267">
    <property type="entry name" value="AH/BAR_dom_sf"/>
</dbReference>
<dbReference type="InterPro" id="IPR002110">
    <property type="entry name" value="Ankyrin_rpt"/>
</dbReference>
<dbReference type="InterPro" id="IPR036770">
    <property type="entry name" value="Ankyrin_rpt-contain_sf"/>
</dbReference>
<dbReference type="InterPro" id="IPR037278">
    <property type="entry name" value="ARFGAP/RecO"/>
</dbReference>
<dbReference type="InterPro" id="IPR001164">
    <property type="entry name" value="ArfGAP_dom"/>
</dbReference>
<dbReference type="InterPro" id="IPR038508">
    <property type="entry name" value="ArfGAP_dom_sf"/>
</dbReference>
<dbReference type="InterPro" id="IPR043593">
    <property type="entry name" value="ASAP"/>
</dbReference>
<dbReference type="InterPro" id="IPR037928">
    <property type="entry name" value="ASAP1_BAR"/>
</dbReference>
<dbReference type="InterPro" id="IPR038016">
    <property type="entry name" value="ASAP1_SH3"/>
</dbReference>
<dbReference type="InterPro" id="IPR004148">
    <property type="entry name" value="BAR_dom"/>
</dbReference>
<dbReference type="InterPro" id="IPR011993">
    <property type="entry name" value="PH-like_dom_sf"/>
</dbReference>
<dbReference type="InterPro" id="IPR037844">
    <property type="entry name" value="PH_ASAP"/>
</dbReference>
<dbReference type="InterPro" id="IPR001849">
    <property type="entry name" value="PH_domain"/>
</dbReference>
<dbReference type="InterPro" id="IPR036028">
    <property type="entry name" value="SH3-like_dom_sf"/>
</dbReference>
<dbReference type="InterPro" id="IPR001452">
    <property type="entry name" value="SH3_domain"/>
</dbReference>
<dbReference type="PANTHER" id="PTHR45854:SF2">
    <property type="entry name" value="ARF-GAP WITH SH3 DOMAIN, ANK REPEAT AND PH DOMAIN-CONTAINING PROTEIN 1"/>
    <property type="match status" value="1"/>
</dbReference>
<dbReference type="PANTHER" id="PTHR45854">
    <property type="entry name" value="ASAP FAMILY MEMBER"/>
    <property type="match status" value="1"/>
</dbReference>
<dbReference type="Pfam" id="PF12796">
    <property type="entry name" value="Ank_2"/>
    <property type="match status" value="1"/>
</dbReference>
<dbReference type="Pfam" id="PF01412">
    <property type="entry name" value="ArfGap"/>
    <property type="match status" value="1"/>
</dbReference>
<dbReference type="Pfam" id="PF16746">
    <property type="entry name" value="BAR_3"/>
    <property type="match status" value="1"/>
</dbReference>
<dbReference type="Pfam" id="PF00169">
    <property type="entry name" value="PH"/>
    <property type="match status" value="1"/>
</dbReference>
<dbReference type="Pfam" id="PF14604">
    <property type="entry name" value="SH3_9"/>
    <property type="match status" value="1"/>
</dbReference>
<dbReference type="PRINTS" id="PR00405">
    <property type="entry name" value="REVINTRACTNG"/>
</dbReference>
<dbReference type="SMART" id="SM00248">
    <property type="entry name" value="ANK"/>
    <property type="match status" value="2"/>
</dbReference>
<dbReference type="SMART" id="SM00105">
    <property type="entry name" value="ArfGap"/>
    <property type="match status" value="1"/>
</dbReference>
<dbReference type="SMART" id="SM00233">
    <property type="entry name" value="PH"/>
    <property type="match status" value="1"/>
</dbReference>
<dbReference type="SMART" id="SM00326">
    <property type="entry name" value="SH3"/>
    <property type="match status" value="1"/>
</dbReference>
<dbReference type="SUPFAM" id="SSF48403">
    <property type="entry name" value="Ankyrin repeat"/>
    <property type="match status" value="1"/>
</dbReference>
<dbReference type="SUPFAM" id="SSF57863">
    <property type="entry name" value="ArfGap/RecO-like zinc finger"/>
    <property type="match status" value="1"/>
</dbReference>
<dbReference type="SUPFAM" id="SSF103657">
    <property type="entry name" value="BAR/IMD domain-like"/>
    <property type="match status" value="1"/>
</dbReference>
<dbReference type="SUPFAM" id="SSF50729">
    <property type="entry name" value="PH domain-like"/>
    <property type="match status" value="1"/>
</dbReference>
<dbReference type="SUPFAM" id="SSF50044">
    <property type="entry name" value="SH3-domain"/>
    <property type="match status" value="1"/>
</dbReference>
<dbReference type="PROSITE" id="PS50297">
    <property type="entry name" value="ANK_REP_REGION"/>
    <property type="match status" value="1"/>
</dbReference>
<dbReference type="PROSITE" id="PS50088">
    <property type="entry name" value="ANK_REPEAT"/>
    <property type="match status" value="1"/>
</dbReference>
<dbReference type="PROSITE" id="PS50115">
    <property type="entry name" value="ARFGAP"/>
    <property type="match status" value="1"/>
</dbReference>
<dbReference type="PROSITE" id="PS50003">
    <property type="entry name" value="PH_DOMAIN"/>
    <property type="match status" value="1"/>
</dbReference>
<dbReference type="PROSITE" id="PS50002">
    <property type="entry name" value="SH3"/>
    <property type="match status" value="1"/>
</dbReference>
<keyword id="KW-0002">3D-structure</keyword>
<keyword id="KW-0025">Alternative splicing</keyword>
<keyword id="KW-0040">ANK repeat</keyword>
<keyword id="KW-0970">Cilium biogenesis/degradation</keyword>
<keyword id="KW-0963">Cytoplasm</keyword>
<keyword id="KW-0333">Golgi apparatus</keyword>
<keyword id="KW-0343">GTPase activation</keyword>
<keyword id="KW-0472">Membrane</keyword>
<keyword id="KW-0479">Metal-binding</keyword>
<keyword id="KW-0597">Phosphoprotein</keyword>
<keyword id="KW-1267">Proteomics identification</keyword>
<keyword id="KW-1185">Reference proteome</keyword>
<keyword id="KW-0677">Repeat</keyword>
<keyword id="KW-0728">SH3 domain</keyword>
<keyword id="KW-0862">Zinc</keyword>
<keyword id="KW-0863">Zinc-finger</keyword>
<evidence type="ECO:0000250" key="1"/>
<evidence type="ECO:0000250" key="2">
    <source>
        <dbReference type="UniProtKB" id="Q1AAU6"/>
    </source>
</evidence>
<evidence type="ECO:0000250" key="3">
    <source>
        <dbReference type="UniProtKB" id="Q9QWY8"/>
    </source>
</evidence>
<evidence type="ECO:0000255" key="4">
    <source>
        <dbReference type="PROSITE-ProRule" id="PRU00145"/>
    </source>
</evidence>
<evidence type="ECO:0000255" key="5">
    <source>
        <dbReference type="PROSITE-ProRule" id="PRU00192"/>
    </source>
</evidence>
<evidence type="ECO:0000255" key="6">
    <source>
        <dbReference type="PROSITE-ProRule" id="PRU00288"/>
    </source>
</evidence>
<evidence type="ECO:0000256" key="7">
    <source>
        <dbReference type="SAM" id="MobiDB-lite"/>
    </source>
</evidence>
<evidence type="ECO:0000269" key="8">
    <source>
    </source>
</evidence>
<evidence type="ECO:0000269" key="9">
    <source>
    </source>
</evidence>
<evidence type="ECO:0000269" key="10">
    <source>
    </source>
</evidence>
<evidence type="ECO:0000269" key="11">
    <source>
    </source>
</evidence>
<evidence type="ECO:0000269" key="12">
    <source>
    </source>
</evidence>
<evidence type="ECO:0000303" key="13">
    <source>
    </source>
</evidence>
<evidence type="ECO:0000303" key="14">
    <source>
    </source>
</evidence>
<evidence type="ECO:0007744" key="15">
    <source>
    </source>
</evidence>
<evidence type="ECO:0007744" key="16">
    <source>
    </source>
</evidence>
<evidence type="ECO:0007744" key="17">
    <source>
    </source>
</evidence>
<evidence type="ECO:0007744" key="18">
    <source>
    </source>
</evidence>
<evidence type="ECO:0007744" key="19">
    <source>
    </source>
</evidence>
<evidence type="ECO:0007744" key="20">
    <source>
    </source>
</evidence>
<evidence type="ECO:0007829" key="21">
    <source>
        <dbReference type="PDB" id="2DA0"/>
    </source>
</evidence>
<evidence type="ECO:0007829" key="22">
    <source>
        <dbReference type="PDB" id="2ED1"/>
    </source>
</evidence>
<sequence length="1129" mass="125498">MRSSASRLSSFSSRDSLWNRMPDQISVSEFIAETTEDYNSPTTSSFTTRLHNCRNTVTLLEEALDQDRTALQKVKKSVKAIYNSGQDHVQNEENYAQVLDKFGSNFLSRDNPDLGTAFVKFSTLTKELSTLLKNLLQGLSHNVIFTLDSLLKGDLKGVKGDLKKPFDKAWKDYETKFTKIEKEKREHAKQHGMIRTEITGAEIAEEMEKERRLFQLQMCEYLIKVNEIKTKKGVDLLQNLIKYYHAQCNFFQDGLKTADKLKQYIEKLAADLYNIKQTQDEEKKQLTALRDLIKSSLQLDQKEDSQSRQGGYSMHQLQGNKEYGSEKKGYLLKKSDGIRKVWQRRKCSVKNGILTISHATSNRQPAKLNLLTCQVKPNAEDKKSFDLISHNRTYHFQAEDEQDYVAWISVLTNSKEEALTMAFRGEQSAGENSLEDLTKAIIEDVQRLPGNDICCDCGSSEPTWLSTNLGILTCIECSGIHREMGVHISRIQSLELDKLGTSELLLAKNVGNNSFNDIMEANLPSPSPKPTPSSDMTVRKEYITAKYVDHRFSRKTCSTSSAKLNELLEAIKSRDLLALIQVYAEGVELMEPLLEPGQELGETALHLAVRTADQTSLHLVDFLVQNCGNLDKQTALGNTVLHYCSMYSKPECLKLLLRSKPTVDIVNQAGETALDIAKRLKATQCEDLLSQAKSGKFNPHVHVEYEWNLRQEEIDESDDDLDDKPSPIKKERSPRPQSFCHSSSISPQDKLALPGFSTPRDKQRLSYGAFTNQIFVSTSTDSPTSPTTEAPPLPPRNAGKGPTGPPSTLPLSTQTSSGSSTLSKKRPPPPPPGHKRTLSDPPSPLPHGPPNKGAVPWGNDGGPSSSSKTTNKFEGLSQQSSTSSAKTALGPRVLPKLPQKVALRKTDHLSLDKATIPPEIFQKSSQLAELPQKPPPGDLPPKPTELAPKPQIGDLPPKPGELPPKPQLGDLPPKPQLSDLPPKPQMKDLPPKPQLGDLLAKSQTGDVSPKAQQPSEVTLKSHPLDLSPNVQSRDAIQKQASEDSNDLTPTLPETPVPLPRKINTGKNKVRRVKTIYDCQADNDDELTFIEGEVIIVTGEEDQEWWIGHIEGQPERKGVFPVSFVHILSD</sequence>
<organism>
    <name type="scientific">Homo sapiens</name>
    <name type="common">Human</name>
    <dbReference type="NCBI Taxonomy" id="9606"/>
    <lineage>
        <taxon>Eukaryota</taxon>
        <taxon>Metazoa</taxon>
        <taxon>Chordata</taxon>
        <taxon>Craniata</taxon>
        <taxon>Vertebrata</taxon>
        <taxon>Euteleostomi</taxon>
        <taxon>Mammalia</taxon>
        <taxon>Eutheria</taxon>
        <taxon>Euarchontoglires</taxon>
        <taxon>Primates</taxon>
        <taxon>Haplorrhini</taxon>
        <taxon>Catarrhini</taxon>
        <taxon>Hominidae</taxon>
        <taxon>Homo</taxon>
    </lineage>
</organism>
<reference key="1">
    <citation type="journal article" date="2006" name="Nature">
        <title>DNA sequence and analysis of human chromosome 8.</title>
        <authorList>
            <person name="Nusbaum C."/>
            <person name="Mikkelsen T.S."/>
            <person name="Zody M.C."/>
            <person name="Asakawa S."/>
            <person name="Taudien S."/>
            <person name="Garber M."/>
            <person name="Kodira C.D."/>
            <person name="Schueler M.G."/>
            <person name="Shimizu A."/>
            <person name="Whittaker C.A."/>
            <person name="Chang J.L."/>
            <person name="Cuomo C.A."/>
            <person name="Dewar K."/>
            <person name="FitzGerald M.G."/>
            <person name="Yang X."/>
            <person name="Allen N.R."/>
            <person name="Anderson S."/>
            <person name="Asakawa T."/>
            <person name="Blechschmidt K."/>
            <person name="Bloom T."/>
            <person name="Borowsky M.L."/>
            <person name="Butler J."/>
            <person name="Cook A."/>
            <person name="Corum B."/>
            <person name="DeArellano K."/>
            <person name="DeCaprio D."/>
            <person name="Dooley K.T."/>
            <person name="Dorris L. III"/>
            <person name="Engels R."/>
            <person name="Gloeckner G."/>
            <person name="Hafez N."/>
            <person name="Hagopian D.S."/>
            <person name="Hall J.L."/>
            <person name="Ishikawa S.K."/>
            <person name="Jaffe D.B."/>
            <person name="Kamat A."/>
            <person name="Kudoh J."/>
            <person name="Lehmann R."/>
            <person name="Lokitsang T."/>
            <person name="Macdonald P."/>
            <person name="Major J.E."/>
            <person name="Matthews C.D."/>
            <person name="Mauceli E."/>
            <person name="Menzel U."/>
            <person name="Mihalev A.H."/>
            <person name="Minoshima S."/>
            <person name="Murayama Y."/>
            <person name="Naylor J.W."/>
            <person name="Nicol R."/>
            <person name="Nguyen C."/>
            <person name="O'Leary S.B."/>
            <person name="O'Neill K."/>
            <person name="Parker S.C.J."/>
            <person name="Polley A."/>
            <person name="Raymond C.K."/>
            <person name="Reichwald K."/>
            <person name="Rodriguez J."/>
            <person name="Sasaki T."/>
            <person name="Schilhabel M."/>
            <person name="Siddiqui R."/>
            <person name="Smith C.L."/>
            <person name="Sneddon T.P."/>
            <person name="Talamas J.A."/>
            <person name="Tenzin P."/>
            <person name="Topham K."/>
            <person name="Venkataraman V."/>
            <person name="Wen G."/>
            <person name="Yamazaki S."/>
            <person name="Young S.K."/>
            <person name="Zeng Q."/>
            <person name="Zimmer A.R."/>
            <person name="Rosenthal A."/>
            <person name="Birren B.W."/>
            <person name="Platzer M."/>
            <person name="Shimizu N."/>
            <person name="Lander E.S."/>
        </authorList>
    </citation>
    <scope>NUCLEOTIDE SEQUENCE [LARGE SCALE GENOMIC DNA]</scope>
</reference>
<reference key="2">
    <citation type="submission" date="2005-07" db="EMBL/GenBank/DDBJ databases">
        <authorList>
            <person name="Mural R.J."/>
            <person name="Istrail S."/>
            <person name="Sutton G."/>
            <person name="Florea L."/>
            <person name="Halpern A.L."/>
            <person name="Mobarry C.M."/>
            <person name="Lippert R."/>
            <person name="Walenz B."/>
            <person name="Shatkay H."/>
            <person name="Dew I."/>
            <person name="Miller J.R."/>
            <person name="Flanigan M.J."/>
            <person name="Edwards N.J."/>
            <person name="Bolanos R."/>
            <person name="Fasulo D."/>
            <person name="Halldorsson B.V."/>
            <person name="Hannenhalli S."/>
            <person name="Turner R."/>
            <person name="Yooseph S."/>
            <person name="Lu F."/>
            <person name="Nusskern D.R."/>
            <person name="Shue B.C."/>
            <person name="Zheng X.H."/>
            <person name="Zhong F."/>
            <person name="Delcher A.L."/>
            <person name="Huson D.H."/>
            <person name="Kravitz S.A."/>
            <person name="Mouchard L."/>
            <person name="Reinert K."/>
            <person name="Remington K.A."/>
            <person name="Clark A.G."/>
            <person name="Waterman M.S."/>
            <person name="Eichler E.E."/>
            <person name="Adams M.D."/>
            <person name="Hunkapiller M.W."/>
            <person name="Myers E.W."/>
            <person name="Venter J.C."/>
        </authorList>
    </citation>
    <scope>NUCLEOTIDE SEQUENCE [LARGE SCALE GENOMIC DNA]</scope>
</reference>
<reference key="3">
    <citation type="journal article" date="2004" name="Genome Res.">
        <title>The status, quality, and expansion of the NIH full-length cDNA project: the Mammalian Gene Collection (MGC).</title>
        <authorList>
            <consortium name="The MGC Project Team"/>
        </authorList>
    </citation>
    <scope>NUCLEOTIDE SEQUENCE [LARGE SCALE MRNA]</scope>
    <source>
        <tissue>Brain</tissue>
    </source>
</reference>
<reference key="4">
    <citation type="journal article" date="2007" name="BMC Genomics">
        <title>The full-ORF clone resource of the German cDNA consortium.</title>
        <authorList>
            <person name="Bechtel S."/>
            <person name="Rosenfelder H."/>
            <person name="Duda A."/>
            <person name="Schmidt C.P."/>
            <person name="Ernst U."/>
            <person name="Wellenreuther R."/>
            <person name="Mehrle A."/>
            <person name="Schuster C."/>
            <person name="Bahr A."/>
            <person name="Bloecker H."/>
            <person name="Heubner D."/>
            <person name="Hoerlein A."/>
            <person name="Michel G."/>
            <person name="Wedler H."/>
            <person name="Koehrer K."/>
            <person name="Ottenwaelder B."/>
            <person name="Poustka A."/>
            <person name="Wiemann S."/>
            <person name="Schupp I."/>
        </authorList>
    </citation>
    <scope>NUCLEOTIDE SEQUENCE [LARGE SCALE MRNA] OF 174-1129 (ISOFORM 2)</scope>
    <source>
        <tissue>Bone marrow</tissue>
    </source>
</reference>
<reference key="5">
    <citation type="journal article" date="1999" name="DNA Res.">
        <title>Prediction of the coding sequences of unidentified human genes. XV. The complete sequences of 100 new cDNA clones from brain which code for large proteins in vitro.</title>
        <authorList>
            <person name="Nagase T."/>
            <person name="Ishikawa K."/>
            <person name="Kikuno R."/>
            <person name="Hirosawa M."/>
            <person name="Nomura N."/>
            <person name="Ohara O."/>
        </authorList>
    </citation>
    <scope>NUCLEOTIDE SEQUENCE [LARGE SCALE MRNA] OF 184-1129 (ISOFORM 1)</scope>
    <source>
        <tissue>Brain</tissue>
    </source>
</reference>
<reference key="6">
    <citation type="journal article" date="1998" name="Mol. Cell. Biol.">
        <title>ASAP1, a phospholipid-dependent arf GTPase-activating protein that associates with and is phosphorylated by Src.</title>
        <authorList>
            <person name="Brown M.T."/>
            <person name="Andrade J."/>
            <person name="Radhakrishna H."/>
            <person name="Donaldson J.G."/>
            <person name="Cooper J.A."/>
            <person name="Randazzo P.A."/>
        </authorList>
    </citation>
    <scope>PARTIAL NUCLEOTIDE SEQUENCE [MRNA]</scope>
</reference>
<reference key="7">
    <citation type="journal article" date="2002" name="J. Biol. Chem.">
        <title>Interaction of POB1, a downstream molecule of small G protein Ral, with PAG2, a paxillin-binding protein, is involved in cell migration.</title>
        <authorList>
            <person name="Oshiro T."/>
            <person name="Koyama S."/>
            <person name="Sugiyama S."/>
            <person name="Kondo A."/>
            <person name="Onodera Y."/>
            <person name="Asahara T."/>
            <person name="Sabe H."/>
            <person name="Kikuchi A."/>
        </authorList>
    </citation>
    <scope>INTERACTION WITH REPS2</scope>
</reference>
<reference key="8">
    <citation type="journal article" date="2008" name="J. Proteome Res.">
        <title>Combining protein-based IMAC, peptide-based IMAC, and MudPIT for efficient phosphoproteomic analysis.</title>
        <authorList>
            <person name="Cantin G.T."/>
            <person name="Yi W."/>
            <person name="Lu B."/>
            <person name="Park S.K."/>
            <person name="Xu T."/>
            <person name="Lee J.-D."/>
            <person name="Yates J.R. III"/>
        </authorList>
    </citation>
    <scope>PHOSPHORYLATION [LARGE SCALE ANALYSIS] AT SER-1027</scope>
    <scope>IDENTIFICATION BY MASS SPECTROMETRY [LARGE SCALE ANALYSIS]</scope>
    <source>
        <tissue>Cervix carcinoma</tissue>
    </source>
</reference>
<reference key="9">
    <citation type="journal article" date="2008" name="J. Proteome Res.">
        <title>Phosphoproteome of resting human platelets.</title>
        <authorList>
            <person name="Zahedi R.P."/>
            <person name="Lewandrowski U."/>
            <person name="Wiesner J."/>
            <person name="Wortelkamp S."/>
            <person name="Moebius J."/>
            <person name="Schuetz C."/>
            <person name="Walter U."/>
            <person name="Gambaryan S."/>
            <person name="Sickmann A."/>
        </authorList>
    </citation>
    <scope>PHOSPHORYLATION [LARGE SCALE ANALYSIS] AT SER-843 AND SER-1008</scope>
    <scope>IDENTIFICATION BY MASS SPECTROMETRY [LARGE SCALE ANALYSIS]</scope>
    <source>
        <tissue>Platelet</tissue>
    </source>
</reference>
<reference key="10">
    <citation type="journal article" date="2008" name="Proc. Natl. Acad. Sci. U.S.A.">
        <title>A quantitative atlas of mitotic phosphorylation.</title>
        <authorList>
            <person name="Dephoure N."/>
            <person name="Zhou C."/>
            <person name="Villen J."/>
            <person name="Beausoleil S.A."/>
            <person name="Bakalarski C.E."/>
            <person name="Elledge S.J."/>
            <person name="Gygi S.P."/>
        </authorList>
    </citation>
    <scope>PHOSPHORYLATION [LARGE SCALE ANALYSIS] AT SER-843 AND SER-1027</scope>
    <scope>IDENTIFICATION BY MASS SPECTROMETRY [LARGE SCALE ANALYSIS]</scope>
    <source>
        <tissue>Cervix carcinoma</tissue>
    </source>
</reference>
<reference key="11">
    <citation type="journal article" date="2010" name="Nature">
        <title>Functional genomic screen for modulators of ciliogenesis and cilium length.</title>
        <authorList>
            <person name="Kim J."/>
            <person name="Lee J.E."/>
            <person name="Heynen-Genel S."/>
            <person name="Suyama E."/>
            <person name="Ono K."/>
            <person name="Lee K."/>
            <person name="Ideker T."/>
            <person name="Aza-Blanc P."/>
            <person name="Gleeson J.G."/>
        </authorList>
    </citation>
    <scope>FUNCTION</scope>
</reference>
<reference key="12">
    <citation type="journal article" date="2010" name="Sci. Signal.">
        <title>Quantitative phosphoproteomics reveals widespread full phosphorylation site occupancy during mitosis.</title>
        <authorList>
            <person name="Olsen J.V."/>
            <person name="Vermeulen M."/>
            <person name="Santamaria A."/>
            <person name="Kumar C."/>
            <person name="Miller M.L."/>
            <person name="Jensen L.J."/>
            <person name="Gnad F."/>
            <person name="Cox J."/>
            <person name="Jensen T.S."/>
            <person name="Nigg E.A."/>
            <person name="Brunak S."/>
            <person name="Mann M."/>
        </authorList>
    </citation>
    <scope>PHOSPHORYLATION [LARGE SCALE ANALYSIS] AT SER-1027</scope>
    <scope>IDENTIFICATION BY MASS SPECTROMETRY [LARGE SCALE ANALYSIS]</scope>
    <source>
        <tissue>Cervix carcinoma</tissue>
    </source>
</reference>
<reference key="13">
    <citation type="journal article" date="2013" name="J. Proteome Res.">
        <title>Toward a comprehensive characterization of a human cancer cell phosphoproteome.</title>
        <authorList>
            <person name="Zhou H."/>
            <person name="Di Palma S."/>
            <person name="Preisinger C."/>
            <person name="Peng M."/>
            <person name="Polat A.N."/>
            <person name="Heck A.J."/>
            <person name="Mohammed S."/>
        </authorList>
    </citation>
    <scope>PHOSPHORYLATION [LARGE SCALE ANALYSIS] AT SER-717; SER-839; SER-843; SER-1027 AND SER-1041</scope>
    <scope>IDENTIFICATION BY MASS SPECTROMETRY [LARGE SCALE ANALYSIS]</scope>
    <source>
        <tissue>Cervix carcinoma</tissue>
        <tissue>Erythroleukemia</tissue>
    </source>
</reference>
<reference key="14">
    <citation type="journal article" date="2014" name="J. Proteomics">
        <title>An enzyme assisted RP-RPLC approach for in-depth analysis of human liver phosphoproteome.</title>
        <authorList>
            <person name="Bian Y."/>
            <person name="Song C."/>
            <person name="Cheng K."/>
            <person name="Dong M."/>
            <person name="Wang F."/>
            <person name="Huang J."/>
            <person name="Sun D."/>
            <person name="Wang L."/>
            <person name="Ye M."/>
            <person name="Zou H."/>
        </authorList>
    </citation>
    <scope>PHOSPHORYLATION [LARGE SCALE ANALYSIS] AT SER-717 AND SER-839</scope>
    <scope>IDENTIFICATION BY MASS SPECTROMETRY [LARGE SCALE ANALYSIS]</scope>
    <source>
        <tissue>Liver</tissue>
    </source>
</reference>
<reference key="15">
    <citation type="journal article" date="2015" name="J. Cell Sci.">
        <title>The Arf and Rab11 effector FIP3 acts synergistically with ASAP1 to direct Rabin8 in ciliary receptor targeting.</title>
        <authorList>
            <person name="Wang J."/>
            <person name="Deretic D."/>
        </authorList>
    </citation>
    <scope>FUNCTION</scope>
    <scope>INTERACTION WITH RAB11A; RAB3IP; RAB11FIP3; ARF4 AND RHO</scope>
    <scope>SUBCELLULAR LOCATION</scope>
</reference>
<reference key="16">
    <citation type="journal article" date="2006" name="Proc. Natl. Acad. Sci. U.S.A.">
        <title>Targeting AMAP1 and cortactin binding bearing an atypical src homology 3/proline interface for prevention of breast cancer invasion and metastasis.</title>
        <authorList>
            <person name="Hashimoto S."/>
            <person name="Hirose M."/>
            <person name="Hashimoto A."/>
            <person name="Morishige M."/>
            <person name="Yamada A."/>
            <person name="Hosaka H."/>
            <person name="Akagi K."/>
            <person name="Ogawa E."/>
            <person name="Oneyama C."/>
            <person name="Agatsuma T."/>
            <person name="Okada M."/>
            <person name="Kobayashi H."/>
            <person name="Wada H."/>
            <person name="Nakano H."/>
            <person name="Ikegami T."/>
            <person name="Nakagawa A."/>
            <person name="Sabe H."/>
        </authorList>
    </citation>
    <scope>X-RAY CRYSTALLOGRAPHY (1.9 ANGSTROMS) OF 823-837 IN COMPLEX WITH CTTN</scope>
</reference>
<reference key="17">
    <citation type="submission" date="2006-06" db="PDB data bank">
        <title>Solution structure of the PH domain of PIP2-dependent ARF1 GTPase-activating protein from human.</title>
        <authorList>
            <consortium name="RIKEN structural genomics initiative (RSGI)"/>
        </authorList>
    </citation>
    <scope>STRUCTURE BY NMR OF 319-428</scope>
</reference>
<reference key="18">
    <citation type="submission" date="2009-02" db="PDB data bank">
        <title>Solution structure of the SH3 domain of 130 kDA phosphatidylinositol 4,5-biphosphate-dependent ARF1 GTPase-activating protein.</title>
        <authorList>
            <consortium name="RIKEN structural genomics initiative (RSGI)"/>
        </authorList>
    </citation>
    <scope>STRUCTURE BY NMR OF 1067-1129</scope>
</reference>
<reference key="19">
    <citation type="journal article" date="2010" name="Biochemistry">
        <title>Structural basis of the recognition of the SAMP motif of adenomatous polyposis coli by the Src-homology 3 domain.</title>
        <authorList>
            <person name="Kaieda S."/>
            <person name="Matsui C."/>
            <person name="Mimori-Kiyosue Y."/>
            <person name="Ikegami T."/>
        </authorList>
    </citation>
    <scope>STRUCTURE BY NMR OF 1069-1129 IN COMPLEX WITH APC</scope>
    <scope>INTERACTION WITH APC</scope>
</reference>
<gene>
    <name type="primary">ASAP1</name>
    <name type="synonym">DDEF1</name>
    <name type="synonym">KIAA1249</name>
    <name evidence="14" type="synonym">PAG2</name>
</gene>
<protein>
    <recommendedName>
        <fullName>Arf-GAP with SH3 domain, ANK repeat and PH domain-containing protein 1</fullName>
    </recommendedName>
    <alternativeName>
        <fullName>130 kDa phosphatidylinositol 4,5-bisphosphate-dependent ARF1 GTPase-activating protein</fullName>
    </alternativeName>
    <alternativeName>
        <fullName>ADP-ribosylation factor-directed GTPase-activating protein 1</fullName>
        <shortName>ARF GTPase-activating protein 1</shortName>
    </alternativeName>
    <alternativeName>
        <fullName>Development and differentiation-enhancing factor 1</fullName>
        <shortName>DEF-1</shortName>
        <shortName>Differentiation-enhancing factor 1</shortName>
    </alternativeName>
    <alternativeName>
        <fullName>PIP2-dependent ARF1 GAP</fullName>
    </alternativeName>
</protein>
<accession>Q9ULH1</accession>
<accession>B2RNV3</accession>
<proteinExistence type="evidence at protein level"/>